<reference key="1">
    <citation type="journal article" date="2004" name="Nat. Genet.">
        <title>Complete sequencing and characterization of 21,243 full-length human cDNAs.</title>
        <authorList>
            <person name="Ota T."/>
            <person name="Suzuki Y."/>
            <person name="Nishikawa T."/>
            <person name="Otsuki T."/>
            <person name="Sugiyama T."/>
            <person name="Irie R."/>
            <person name="Wakamatsu A."/>
            <person name="Hayashi K."/>
            <person name="Sato H."/>
            <person name="Nagai K."/>
            <person name="Kimura K."/>
            <person name="Makita H."/>
            <person name="Sekine M."/>
            <person name="Obayashi M."/>
            <person name="Nishi T."/>
            <person name="Shibahara T."/>
            <person name="Tanaka T."/>
            <person name="Ishii S."/>
            <person name="Yamamoto J."/>
            <person name="Saito K."/>
            <person name="Kawai Y."/>
            <person name="Isono Y."/>
            <person name="Nakamura Y."/>
            <person name="Nagahari K."/>
            <person name="Murakami K."/>
            <person name="Yasuda T."/>
            <person name="Iwayanagi T."/>
            <person name="Wagatsuma M."/>
            <person name="Shiratori A."/>
            <person name="Sudo H."/>
            <person name="Hosoiri T."/>
            <person name="Kaku Y."/>
            <person name="Kodaira H."/>
            <person name="Kondo H."/>
            <person name="Sugawara M."/>
            <person name="Takahashi M."/>
            <person name="Kanda K."/>
            <person name="Yokoi T."/>
            <person name="Furuya T."/>
            <person name="Kikkawa E."/>
            <person name="Omura Y."/>
            <person name="Abe K."/>
            <person name="Kamihara K."/>
            <person name="Katsuta N."/>
            <person name="Sato K."/>
            <person name="Tanikawa M."/>
            <person name="Yamazaki M."/>
            <person name="Ninomiya K."/>
            <person name="Ishibashi T."/>
            <person name="Yamashita H."/>
            <person name="Murakawa K."/>
            <person name="Fujimori K."/>
            <person name="Tanai H."/>
            <person name="Kimata M."/>
            <person name="Watanabe M."/>
            <person name="Hiraoka S."/>
            <person name="Chiba Y."/>
            <person name="Ishida S."/>
            <person name="Ono Y."/>
            <person name="Takiguchi S."/>
            <person name="Watanabe S."/>
            <person name="Yosida M."/>
            <person name="Hotuta T."/>
            <person name="Kusano J."/>
            <person name="Kanehori K."/>
            <person name="Takahashi-Fujii A."/>
            <person name="Hara H."/>
            <person name="Tanase T.-O."/>
            <person name="Nomura Y."/>
            <person name="Togiya S."/>
            <person name="Komai F."/>
            <person name="Hara R."/>
            <person name="Takeuchi K."/>
            <person name="Arita M."/>
            <person name="Imose N."/>
            <person name="Musashino K."/>
            <person name="Yuuki H."/>
            <person name="Oshima A."/>
            <person name="Sasaki N."/>
            <person name="Aotsuka S."/>
            <person name="Yoshikawa Y."/>
            <person name="Matsunawa H."/>
            <person name="Ichihara T."/>
            <person name="Shiohata N."/>
            <person name="Sano S."/>
            <person name="Moriya S."/>
            <person name="Momiyama H."/>
            <person name="Satoh N."/>
            <person name="Takami S."/>
            <person name="Terashima Y."/>
            <person name="Suzuki O."/>
            <person name="Nakagawa S."/>
            <person name="Senoh A."/>
            <person name="Mizoguchi H."/>
            <person name="Goto Y."/>
            <person name="Shimizu F."/>
            <person name="Wakebe H."/>
            <person name="Hishigaki H."/>
            <person name="Watanabe T."/>
            <person name="Sugiyama A."/>
            <person name="Takemoto M."/>
            <person name="Kawakami B."/>
            <person name="Yamazaki M."/>
            <person name="Watanabe K."/>
            <person name="Kumagai A."/>
            <person name="Itakura S."/>
            <person name="Fukuzumi Y."/>
            <person name="Fujimori Y."/>
            <person name="Komiyama M."/>
            <person name="Tashiro H."/>
            <person name="Tanigami A."/>
            <person name="Fujiwara T."/>
            <person name="Ono T."/>
            <person name="Yamada K."/>
            <person name="Fujii Y."/>
            <person name="Ozaki K."/>
            <person name="Hirao M."/>
            <person name="Ohmori Y."/>
            <person name="Kawabata A."/>
            <person name="Hikiji T."/>
            <person name="Kobatake N."/>
            <person name="Inagaki H."/>
            <person name="Ikema Y."/>
            <person name="Okamoto S."/>
            <person name="Okitani R."/>
            <person name="Kawakami T."/>
            <person name="Noguchi S."/>
            <person name="Itoh T."/>
            <person name="Shigeta K."/>
            <person name="Senba T."/>
            <person name="Matsumura K."/>
            <person name="Nakajima Y."/>
            <person name="Mizuno T."/>
            <person name="Morinaga M."/>
            <person name="Sasaki M."/>
            <person name="Togashi T."/>
            <person name="Oyama M."/>
            <person name="Hata H."/>
            <person name="Watanabe M."/>
            <person name="Komatsu T."/>
            <person name="Mizushima-Sugano J."/>
            <person name="Satoh T."/>
            <person name="Shirai Y."/>
            <person name="Takahashi Y."/>
            <person name="Nakagawa K."/>
            <person name="Okumura K."/>
            <person name="Nagase T."/>
            <person name="Nomura N."/>
            <person name="Kikuchi H."/>
            <person name="Masuho Y."/>
            <person name="Yamashita R."/>
            <person name="Nakai K."/>
            <person name="Yada T."/>
            <person name="Nakamura Y."/>
            <person name="Ohara O."/>
            <person name="Isogai T."/>
            <person name="Sugano S."/>
        </authorList>
    </citation>
    <scope>NUCLEOTIDE SEQUENCE [LARGE SCALE MRNA] (ISOFORM 1)</scope>
    <source>
        <tissue>Ileal mucosa</tissue>
        <tissue>Uterus</tissue>
    </source>
</reference>
<reference key="2">
    <citation type="journal article" date="2003" name="Nature">
        <title>The DNA sequence and analysis of human chromosome 14.</title>
        <authorList>
            <person name="Heilig R."/>
            <person name="Eckenberg R."/>
            <person name="Petit J.-L."/>
            <person name="Fonknechten N."/>
            <person name="Da Silva C."/>
            <person name="Cattolico L."/>
            <person name="Levy M."/>
            <person name="Barbe V."/>
            <person name="De Berardinis V."/>
            <person name="Ureta-Vidal A."/>
            <person name="Pelletier E."/>
            <person name="Vico V."/>
            <person name="Anthouard V."/>
            <person name="Rowen L."/>
            <person name="Madan A."/>
            <person name="Qin S."/>
            <person name="Sun H."/>
            <person name="Du H."/>
            <person name="Pepin K."/>
            <person name="Artiguenave F."/>
            <person name="Robert C."/>
            <person name="Cruaud C."/>
            <person name="Bruels T."/>
            <person name="Jaillon O."/>
            <person name="Friedlander L."/>
            <person name="Samson G."/>
            <person name="Brottier P."/>
            <person name="Cure S."/>
            <person name="Segurens B."/>
            <person name="Aniere F."/>
            <person name="Samain S."/>
            <person name="Crespeau H."/>
            <person name="Abbasi N."/>
            <person name="Aiach N."/>
            <person name="Boscus D."/>
            <person name="Dickhoff R."/>
            <person name="Dors M."/>
            <person name="Dubois I."/>
            <person name="Friedman C."/>
            <person name="Gouyvenoux M."/>
            <person name="James R."/>
            <person name="Madan A."/>
            <person name="Mairey-Estrada B."/>
            <person name="Mangenot S."/>
            <person name="Martins N."/>
            <person name="Menard M."/>
            <person name="Oztas S."/>
            <person name="Ratcliffe A."/>
            <person name="Shaffer T."/>
            <person name="Trask B."/>
            <person name="Vacherie B."/>
            <person name="Bellemere C."/>
            <person name="Belser C."/>
            <person name="Besnard-Gonnet M."/>
            <person name="Bartol-Mavel D."/>
            <person name="Boutard M."/>
            <person name="Briez-Silla S."/>
            <person name="Combette S."/>
            <person name="Dufosse-Laurent V."/>
            <person name="Ferron C."/>
            <person name="Lechaplais C."/>
            <person name="Louesse C."/>
            <person name="Muselet D."/>
            <person name="Magdelenat G."/>
            <person name="Pateau E."/>
            <person name="Petit E."/>
            <person name="Sirvain-Trukniewicz P."/>
            <person name="Trybou A."/>
            <person name="Vega-Czarny N."/>
            <person name="Bataille E."/>
            <person name="Bluet E."/>
            <person name="Bordelais I."/>
            <person name="Dubois M."/>
            <person name="Dumont C."/>
            <person name="Guerin T."/>
            <person name="Haffray S."/>
            <person name="Hammadi R."/>
            <person name="Muanga J."/>
            <person name="Pellouin V."/>
            <person name="Robert D."/>
            <person name="Wunderle E."/>
            <person name="Gauguet G."/>
            <person name="Roy A."/>
            <person name="Sainte-Marthe L."/>
            <person name="Verdier J."/>
            <person name="Verdier-Discala C."/>
            <person name="Hillier L.W."/>
            <person name="Fulton L."/>
            <person name="McPherson J."/>
            <person name="Matsuda F."/>
            <person name="Wilson R."/>
            <person name="Scarpelli C."/>
            <person name="Gyapay G."/>
            <person name="Wincker P."/>
            <person name="Saurin W."/>
            <person name="Quetier F."/>
            <person name="Waterston R."/>
            <person name="Hood L."/>
            <person name="Weissenbach J."/>
        </authorList>
    </citation>
    <scope>NUCLEOTIDE SEQUENCE [LARGE SCALE GENOMIC DNA]</scope>
</reference>
<reference key="3">
    <citation type="journal article" date="2004" name="Genome Res.">
        <title>The status, quality, and expansion of the NIH full-length cDNA project: the Mammalian Gene Collection (MGC).</title>
        <authorList>
            <consortium name="The MGC Project Team"/>
        </authorList>
    </citation>
    <scope>NUCLEOTIDE SEQUENCE [LARGE SCALE MRNA] (ISOFORMS 2 AND 3)</scope>
    <scope>VARIANT SER-245</scope>
    <source>
        <tissue>Brain</tissue>
    </source>
</reference>
<reference key="4">
    <citation type="journal article" date="2017" name="Am. J. Hum. Genet.">
        <title>Mutations in TMEM260 cause a pediatric neurodevelopmental, cardiac, and renal syndrome.</title>
        <authorList>
            <person name="Ta-Shma A."/>
            <person name="Khan T.N."/>
            <person name="Vivante A."/>
            <person name="Willer J.R."/>
            <person name="Matak P."/>
            <person name="Jalas C."/>
            <person name="Pode-Shakked B."/>
            <person name="Salem Y."/>
            <person name="Anikster Y."/>
            <person name="Hildebrandt F."/>
            <person name="Katsanis N."/>
            <person name="Elpeleg O."/>
            <person name="Davis E.E."/>
        </authorList>
    </citation>
    <scope>TISSUE SPECIFICITY (ISOFORMS 1 AND 3)</scope>
    <scope>SUBCELLULAR LOCATION (ISOFORMS 1 AND 3)</scope>
    <scope>INVOLVEMENT IN SHDRA</scope>
    <scope>VARIANT SHDRA 465-GLN--VAL-707 DEL</scope>
    <scope>CHARACTERIZATION OF VARIANT SHDRA 465-GLN--VAL-707 DEL</scope>
</reference>
<reference key="5">
    <citation type="journal article" date="2022" name="Clin. Genet.">
        <title>Biallelic TMEM260 variants cause truncus arteriosus, with or without renal defects.</title>
        <authorList>
            <consortium name="Genomics England Research Consortium"/>
            <person name="Pagnamenta A.T."/>
            <person name="Jackson A."/>
            <person name="Perveen R."/>
            <person name="Beaman G."/>
            <person name="Petts G."/>
            <person name="Gupta A."/>
            <person name="Hyder Z."/>
            <person name="Chung B.H."/>
            <person name="Kan A.S."/>
            <person name="Cheung K.W."/>
            <person name="Kerstjens-Frederikse W.S."/>
            <person name="Abbott K.M."/>
            <person name="Elpeleg O."/>
            <person name="Taylor J.C."/>
            <person name="Banka S."/>
            <person name="Ta-Shma A."/>
        </authorList>
    </citation>
    <scope>VARIANTS SHDRA LYS-115; 465-GLN--VAL-707 DEL; 470-TYR--VAL-707 DEL AND GLN-582</scope>
</reference>
<reference key="6">
    <citation type="journal article" date="2023" name="Proc. Natl. Acad. Sci. U.S.A.">
        <title>The SHDRA syndrome-associated geDne TMEM260 encodes a protein-specific O-mannosyltransferase.</title>
        <authorList>
            <person name="Larsen I.S.B."/>
            <person name="Povolo L."/>
            <person name="Zhou L."/>
            <person name="Tian W."/>
            <person name="Mygind K.J."/>
            <person name="Hintze J."/>
            <person name="Jiang C."/>
            <person name="Hartill V."/>
            <person name="Prescott K."/>
            <person name="Johnson C.A."/>
            <person name="Mullegama S.V."/>
            <person name="McConkie-Rosell A."/>
            <person name="McDonald M."/>
            <person name="Hansen L."/>
            <person name="Vakhrushev S.Y."/>
            <person name="Schjoldager K.T."/>
            <person name="Clausen H."/>
            <person name="Worzfeld T."/>
            <person name="Joshi H.J."/>
            <person name="Halim A."/>
        </authorList>
    </citation>
    <scope>FUNCTION</scope>
    <scope>CATALYTIC ACTIVITY</scope>
    <scope>SUBCELLULAR LOCATION</scope>
    <scope>TOPOLOGY</scope>
    <scope>GLYCOSYLATION AT ASN-568</scope>
    <scope>VARIANTS SHDRA TYR-98; ARG-453 AND 465-GLN--VAL-707 DEL</scope>
    <scope>CHARACTERIZATION OF VARIANTS SHDRA TYR-98; ARG-453 AND 465-GLN--VAL-707 DEL</scope>
    <scope>MUTAGENESIS OF ASP-52</scope>
</reference>
<comment type="function">
    <text evidence="5">O-mannosyl-transferase that transfers mannosyl residues to the hydroxyl group of serine or threonine residues of proteins (PubMed:37186866). Specifically glycosylates the IPT/TIG domain of target proteins, such as MET and MST1R/RON (PubMed:37186866). TMEM260-mediated O-mannosylated residues are composed of single mannose glycans that are not elongated or modified (PubMed:37186866).</text>
</comment>
<comment type="catalytic activity">
    <reaction evidence="5">
        <text>a di-trans,poly-cis-dolichyl beta-D-mannosyl phosphate + L-seryl-[protein] = 3-O-(alpha-D-mannosyl)-L-seryl-[protein] + a di-trans,poly-cis-dolichyl phosphate + H(+)</text>
        <dbReference type="Rhea" id="RHEA:17377"/>
        <dbReference type="Rhea" id="RHEA-COMP:9863"/>
        <dbReference type="Rhea" id="RHEA-COMP:13546"/>
        <dbReference type="Rhea" id="RHEA-COMP:19498"/>
        <dbReference type="Rhea" id="RHEA-COMP:19501"/>
        <dbReference type="ChEBI" id="CHEBI:15378"/>
        <dbReference type="ChEBI" id="CHEBI:29999"/>
        <dbReference type="ChEBI" id="CHEBI:57683"/>
        <dbReference type="ChEBI" id="CHEBI:58211"/>
        <dbReference type="ChEBI" id="CHEBI:137321"/>
        <dbReference type="EC" id="2.4.1.109"/>
    </reaction>
    <physiologicalReaction direction="left-to-right" evidence="5">
        <dbReference type="Rhea" id="RHEA:17378"/>
    </physiologicalReaction>
</comment>
<comment type="catalytic activity">
    <reaction evidence="5">
        <text>a di-trans,poly-cis-dolichyl beta-D-mannosyl phosphate + L-threonyl-[protein] = 3-O-(alpha-D-mannosyl)-L-threonyl-[protein] + a di-trans,poly-cis-dolichyl phosphate + H(+)</text>
        <dbReference type="Rhea" id="RHEA:53396"/>
        <dbReference type="Rhea" id="RHEA-COMP:11060"/>
        <dbReference type="Rhea" id="RHEA-COMP:13547"/>
        <dbReference type="Rhea" id="RHEA-COMP:19498"/>
        <dbReference type="Rhea" id="RHEA-COMP:19501"/>
        <dbReference type="ChEBI" id="CHEBI:15378"/>
        <dbReference type="ChEBI" id="CHEBI:30013"/>
        <dbReference type="ChEBI" id="CHEBI:57683"/>
        <dbReference type="ChEBI" id="CHEBI:58211"/>
        <dbReference type="ChEBI" id="CHEBI:137323"/>
        <dbReference type="EC" id="2.4.1.109"/>
    </reaction>
    <physiologicalReaction direction="left-to-right" evidence="5">
        <dbReference type="Rhea" id="RHEA:53397"/>
    </physiologicalReaction>
</comment>
<comment type="subcellular location">
    <subcellularLocation>
        <location evidence="5">Endoplasmic reticulum membrane</location>
        <topology evidence="1">Multi-pass membrane protein</topology>
    </subcellularLocation>
</comment>
<comment type="subcellular location">
    <molecule>Isoform 3</molecule>
    <subcellularLocation>
        <location evidence="3">Membrane</location>
    </subcellularLocation>
    <text evidence="3">Shows perinuclear localization.</text>
</comment>
<comment type="alternative products">
    <event type="alternative splicing"/>
    <isoform>
        <id>Q9NX78-1</id>
        <name>1</name>
        <name>Long</name>
        <sequence type="displayed"/>
    </isoform>
    <isoform>
        <id>Q9NX78-2</id>
        <name>2</name>
        <sequence type="described" ref="VSP_008621"/>
    </isoform>
    <isoform>
        <id>Q9NX78-3</id>
        <name>3</name>
        <name>Short</name>
        <sequence type="described" ref="VSP_058993 VSP_058994"/>
    </isoform>
    <text>Additional isoforms seem to exist.</text>
</comment>
<comment type="tissue specificity">
    <molecule>Isoform 1</molecule>
    <text evidence="3">Expressed in brain, heart, kidney, liver, lung, pancreas and placenta but are not detected in skeletal muscle.</text>
</comment>
<comment type="tissue specificity">
    <molecule>Isoform 3</molecule>
    <text evidence="3">Expressed in brain, heart, kidney, liver, lung, pancreas and placenta but are not detected in skeletal muscle.</text>
</comment>
<comment type="disease" evidence="3 4 5">
    <disease id="DI-05001">
        <name>Structural heart defects and renal anomalies syndrome</name>
        <acronym>SHDRA</acronym>
        <description>An autosomal recessive syndrome characterized by central nervous system, cardiac, renal, and digit abnormalities. Clinical features include ventricular and atrial septal defects, truncus arteriosus, tetralogy of Fallot, partial anomalous pulmonary venous return, renal cysts, renal failure, and generalized edema. Some patients show partial agenesis of corpus callosum.</description>
        <dbReference type="MIM" id="617478"/>
    </disease>
    <text>The disease is caused by variants affecting the gene represented in this entry.</text>
</comment>
<comment type="similarity">
    <text evidence="8">Belongs to the glycosyltransferase 117 (GT117) family.</text>
</comment>
<comment type="sequence caution" evidence="8">
    <conflict type="erroneous initiation">
        <sequence resource="EMBL-CDS" id="BAA91139"/>
    </conflict>
    <text>Truncated N-terminus.</text>
</comment>
<comment type="sequence caution" evidence="8">
    <conflict type="frameshift">
        <sequence resource="EMBL" id="BC045556"/>
    </conflict>
</comment>
<keyword id="KW-0025">Alternative splicing</keyword>
<keyword id="KW-0225">Disease variant</keyword>
<keyword id="KW-0256">Endoplasmic reticulum</keyword>
<keyword id="KW-0325">Glycoprotein</keyword>
<keyword id="KW-0328">Glycosyltransferase</keyword>
<keyword id="KW-0472">Membrane</keyword>
<keyword id="KW-1267">Proteomics identification</keyword>
<keyword id="KW-1185">Reference proteome</keyword>
<keyword id="KW-0808">Transferase</keyword>
<keyword id="KW-0812">Transmembrane</keyword>
<keyword id="KW-1133">Transmembrane helix</keyword>
<dbReference type="EC" id="2.4.1.109" evidence="5"/>
<dbReference type="EMBL" id="AK000399">
    <property type="protein sequence ID" value="BAA91139.1"/>
    <property type="status" value="ALT_INIT"/>
    <property type="molecule type" value="mRNA"/>
</dbReference>
<dbReference type="EMBL" id="AK293099">
    <property type="protein sequence ID" value="BAF85788.1"/>
    <property type="molecule type" value="mRNA"/>
</dbReference>
<dbReference type="EMBL" id="AK056291">
    <property type="protein sequence ID" value="BAG51667.1"/>
    <property type="molecule type" value="mRNA"/>
</dbReference>
<dbReference type="EMBL" id="AL161757">
    <property type="status" value="NOT_ANNOTATED_CDS"/>
    <property type="molecule type" value="Genomic_DNA"/>
</dbReference>
<dbReference type="EMBL" id="AL355103">
    <property type="status" value="NOT_ANNOTATED_CDS"/>
    <property type="molecule type" value="Genomic_DNA"/>
</dbReference>
<dbReference type="EMBL" id="AL359234">
    <property type="status" value="NOT_ANNOTATED_CDS"/>
    <property type="molecule type" value="Genomic_DNA"/>
</dbReference>
<dbReference type="EMBL" id="KF455900">
    <property type="status" value="NOT_ANNOTATED_CDS"/>
    <property type="molecule type" value="Genomic_DNA"/>
</dbReference>
<dbReference type="EMBL" id="BC045556">
    <property type="status" value="NOT_ANNOTATED_CDS"/>
    <property type="molecule type" value="mRNA"/>
</dbReference>
<dbReference type="EMBL" id="BC121163">
    <property type="protein sequence ID" value="AAI21164.1"/>
    <property type="molecule type" value="mRNA"/>
</dbReference>
<dbReference type="CCDS" id="CCDS9727.2">
    <molecule id="Q9NX78-1"/>
</dbReference>
<dbReference type="RefSeq" id="NP_060269.3">
    <molecule id="Q9NX78-1"/>
    <property type="nucleotide sequence ID" value="NM_017799.3"/>
</dbReference>
<dbReference type="RefSeq" id="XP_047287453.1">
    <molecule id="Q9NX78-3"/>
    <property type="nucleotide sequence ID" value="XM_047431497.1"/>
</dbReference>
<dbReference type="RefSeq" id="XP_054232227.1">
    <molecule id="Q9NX78-3"/>
    <property type="nucleotide sequence ID" value="XM_054376252.1"/>
</dbReference>
<dbReference type="SMR" id="Q9NX78"/>
<dbReference type="BioGRID" id="120258">
    <property type="interactions" value="12"/>
</dbReference>
<dbReference type="FunCoup" id="Q9NX78">
    <property type="interactions" value="1833"/>
</dbReference>
<dbReference type="IntAct" id="Q9NX78">
    <property type="interactions" value="11"/>
</dbReference>
<dbReference type="STRING" id="9606.ENSP00000261556"/>
<dbReference type="GlyGen" id="Q9NX78">
    <property type="glycosylation" value="3 sites, 2 N-linked glycans (1 site)"/>
</dbReference>
<dbReference type="iPTMnet" id="Q9NX78"/>
<dbReference type="PhosphoSitePlus" id="Q9NX78"/>
<dbReference type="SwissPalm" id="Q9NX78"/>
<dbReference type="BioMuta" id="TMEM260"/>
<dbReference type="DMDM" id="296439393"/>
<dbReference type="jPOST" id="Q9NX78"/>
<dbReference type="MassIVE" id="Q9NX78"/>
<dbReference type="PaxDb" id="9606-ENSP00000261556"/>
<dbReference type="PeptideAtlas" id="Q9NX78"/>
<dbReference type="ProteomicsDB" id="58786"/>
<dbReference type="ProteomicsDB" id="83054">
    <molecule id="Q9NX78-1"/>
</dbReference>
<dbReference type="Antibodypedia" id="185">
    <property type="antibodies" value="45 antibodies from 16 providers"/>
</dbReference>
<dbReference type="DNASU" id="54916"/>
<dbReference type="Ensembl" id="ENST00000261556.11">
    <molecule id="Q9NX78-1"/>
    <property type="protein sequence ID" value="ENSP00000261556.6"/>
    <property type="gene ID" value="ENSG00000070269.14"/>
</dbReference>
<dbReference type="Ensembl" id="ENST00000538838.5">
    <molecule id="Q9NX78-3"/>
    <property type="protein sequence ID" value="ENSP00000441934.1"/>
    <property type="gene ID" value="ENSG00000070269.14"/>
</dbReference>
<dbReference type="GeneID" id="54916"/>
<dbReference type="KEGG" id="hsa:54916"/>
<dbReference type="MANE-Select" id="ENST00000261556.11">
    <property type="protein sequence ID" value="ENSP00000261556.6"/>
    <property type="RefSeq nucleotide sequence ID" value="NM_017799.4"/>
    <property type="RefSeq protein sequence ID" value="NP_060269.3"/>
</dbReference>
<dbReference type="UCSC" id="uc001xcm.4">
    <molecule id="Q9NX78-1"/>
    <property type="organism name" value="human"/>
</dbReference>
<dbReference type="UCSC" id="uc059bva.1">
    <property type="organism name" value="human"/>
</dbReference>
<dbReference type="AGR" id="HGNC:20185"/>
<dbReference type="CTD" id="54916"/>
<dbReference type="DisGeNET" id="54916"/>
<dbReference type="GeneCards" id="TMEM260"/>
<dbReference type="HGNC" id="HGNC:20185">
    <property type="gene designation" value="TMEM260"/>
</dbReference>
<dbReference type="HPA" id="ENSG00000070269">
    <property type="expression patterns" value="Tissue enhanced (cervix)"/>
</dbReference>
<dbReference type="MalaCards" id="TMEM260"/>
<dbReference type="MIM" id="617449">
    <property type="type" value="gene"/>
</dbReference>
<dbReference type="MIM" id="617478">
    <property type="type" value="phenotype"/>
</dbReference>
<dbReference type="neXtProt" id="NX_Q9NX78"/>
<dbReference type="OpenTargets" id="ENSG00000070269"/>
<dbReference type="Orphanet" id="689822">
    <property type="disease" value="Structural heart defects-renal anomalies syndrome"/>
</dbReference>
<dbReference type="PharmGKB" id="PA134894829"/>
<dbReference type="VEuPathDB" id="HostDB:ENSG00000070269"/>
<dbReference type="eggNOG" id="ENOG502QSIA">
    <property type="taxonomic scope" value="Eukaryota"/>
</dbReference>
<dbReference type="GeneTree" id="ENSGT00390000013544"/>
<dbReference type="HOGENOM" id="CLU_019631_1_0_1"/>
<dbReference type="InParanoid" id="Q9NX78"/>
<dbReference type="OMA" id="HSVNLMC"/>
<dbReference type="OrthoDB" id="197432at2759"/>
<dbReference type="PAN-GO" id="Q9NX78">
    <property type="GO annotations" value="0 GO annotations based on evolutionary models"/>
</dbReference>
<dbReference type="PhylomeDB" id="Q9NX78"/>
<dbReference type="TreeFam" id="TF329604"/>
<dbReference type="PathwayCommons" id="Q9NX78"/>
<dbReference type="SignaLink" id="Q9NX78"/>
<dbReference type="BioGRID-ORCS" id="54916">
    <property type="hits" value="11 hits in 1162 CRISPR screens"/>
</dbReference>
<dbReference type="ChiTaRS" id="TMEM260">
    <property type="organism name" value="human"/>
</dbReference>
<dbReference type="GenomeRNAi" id="54916"/>
<dbReference type="Pharos" id="Q9NX78">
    <property type="development level" value="Tdark"/>
</dbReference>
<dbReference type="PRO" id="PR:Q9NX78"/>
<dbReference type="Proteomes" id="UP000005640">
    <property type="component" value="Chromosome 14"/>
</dbReference>
<dbReference type="RNAct" id="Q9NX78">
    <property type="molecule type" value="protein"/>
</dbReference>
<dbReference type="Bgee" id="ENSG00000070269">
    <property type="expression patterns" value="Expressed in corpus epididymis and 187 other cell types or tissues"/>
</dbReference>
<dbReference type="ExpressionAtlas" id="Q9NX78">
    <property type="expression patterns" value="baseline and differential"/>
</dbReference>
<dbReference type="GO" id="GO:0005789">
    <property type="term" value="C:endoplasmic reticulum membrane"/>
    <property type="evidence" value="ECO:0000314"/>
    <property type="project" value="UniProtKB"/>
</dbReference>
<dbReference type="GO" id="GO:0004169">
    <property type="term" value="F:dolichyl-phosphate-mannose-protein mannosyltransferase activity"/>
    <property type="evidence" value="ECO:0000314"/>
    <property type="project" value="UniProtKB"/>
</dbReference>
<dbReference type="GO" id="GO:0051604">
    <property type="term" value="P:protein maturation"/>
    <property type="evidence" value="ECO:0000314"/>
    <property type="project" value="UniProtKB"/>
</dbReference>
<dbReference type="InterPro" id="IPR052724">
    <property type="entry name" value="GT117_domain-containing"/>
</dbReference>
<dbReference type="InterPro" id="IPR021280">
    <property type="entry name" value="TMEM260-like"/>
</dbReference>
<dbReference type="PANTHER" id="PTHR16214">
    <property type="entry name" value="TRANSMEMBRANE PROTEIN 260"/>
    <property type="match status" value="1"/>
</dbReference>
<dbReference type="PANTHER" id="PTHR16214:SF3">
    <property type="entry name" value="TRANSMEMBRANE PROTEIN 260"/>
    <property type="match status" value="1"/>
</dbReference>
<dbReference type="Pfam" id="PF11028">
    <property type="entry name" value="TMEM260-like"/>
    <property type="match status" value="1"/>
</dbReference>
<protein>
    <recommendedName>
        <fullName evidence="8">Protein O-mannosyl-transferase TMEM260</fullName>
        <ecNumber evidence="5">2.4.1.109</ecNumber>
    </recommendedName>
    <alternativeName>
        <fullName evidence="8">Transmembrane protein 260</fullName>
    </alternativeName>
</protein>
<feature type="chain" id="PRO_0000089905" description="Protein O-mannosyl-transferase TMEM260">
    <location>
        <begin position="1"/>
        <end position="707"/>
    </location>
</feature>
<feature type="transmembrane region" description="Helical" evidence="1">
    <location>
        <begin position="28"/>
        <end position="48"/>
    </location>
</feature>
<feature type="transmembrane region" description="Helical" evidence="1">
    <location>
        <begin position="71"/>
        <end position="91"/>
    </location>
</feature>
<feature type="transmembrane region" description="Helical" evidence="1">
    <location>
        <begin position="94"/>
        <end position="114"/>
    </location>
</feature>
<feature type="transmembrane region" description="Helical" evidence="1">
    <location>
        <begin position="141"/>
        <end position="161"/>
    </location>
</feature>
<feature type="transmembrane region" description="Helical" evidence="1">
    <location>
        <begin position="189"/>
        <end position="209"/>
    </location>
</feature>
<feature type="transmembrane region" description="Helical" evidence="1">
    <location>
        <begin position="222"/>
        <end position="242"/>
    </location>
</feature>
<feature type="transmembrane region" description="Helical" evidence="1">
    <location>
        <begin position="318"/>
        <end position="338"/>
    </location>
</feature>
<feature type="transmembrane region" description="Helical" evidence="1">
    <location>
        <begin position="356"/>
        <end position="376"/>
    </location>
</feature>
<feature type="topological domain" description="Lumenal" evidence="10">
    <location>
        <begin position="377"/>
        <end position="707"/>
    </location>
</feature>
<feature type="glycosylation site" description="N-linked (GlcNAc...) asparagine" evidence="1">
    <location>
        <position position="407"/>
    </location>
</feature>
<feature type="glycosylation site" description="N-linked (GlcNAc...) asparagine" evidence="1">
    <location>
        <position position="535"/>
    </location>
</feature>
<feature type="glycosylation site" description="N-linked (GlcNAc...) asparagine" evidence="5">
    <location>
        <position position="568"/>
    </location>
</feature>
<feature type="splice variant" id="VSP_008621" description="In isoform 2." evidence="6">
    <location>
        <begin position="287"/>
        <end position="707"/>
    </location>
</feature>
<feature type="splice variant" id="VSP_058993" description="In isoform 3." evidence="9">
    <original>S</original>
    <variation>R</variation>
    <location>
        <position position="409"/>
    </location>
</feature>
<feature type="splice variant" id="VSP_058994" description="In isoform 3." evidence="9">
    <location>
        <begin position="410"/>
        <end position="707"/>
    </location>
</feature>
<feature type="sequence variant" id="VAR_088292" description="In SHDRA; decreased stability; dbSNP:rs1170968257." evidence="5">
    <original>C</original>
    <variation>Y</variation>
    <location>
        <position position="98"/>
    </location>
</feature>
<feature type="sequence variant" id="VAR_088293" description="In SHDRA; uncertain significance; dbSNP:rs747632686." evidence="4">
    <original>R</original>
    <variation>K</variation>
    <location>
        <position position="115"/>
    </location>
</feature>
<feature type="sequence variant" id="VAR_057823" description="In dbSNP:rs17776256." evidence="2">
    <original>A</original>
    <variation>S</variation>
    <location>
        <position position="245"/>
    </location>
</feature>
<feature type="sequence variant" id="VAR_088294" description="In SHDRA; decreased stability; dbSNP:rs752523485." evidence="5">
    <original>C</original>
    <variation>R</variation>
    <location>
        <position position="453"/>
    </location>
</feature>
<feature type="sequence variant" id="VAR_078766" description="In SHDRA; reduced expression of isoform 1 due to nonsense-mediated decay in patient-derived cells." evidence="3 4 5">
    <location>
        <begin position="465"/>
        <end position="707"/>
    </location>
</feature>
<feature type="sequence variant" id="VAR_088295" description="In SHDRA." evidence="4">
    <location>
        <begin position="470"/>
        <end position="707"/>
    </location>
</feature>
<feature type="sequence variant" id="VAR_057824" description="In dbSNP:rs1041316.">
    <original>S</original>
    <variation>N</variation>
    <location>
        <position position="565"/>
    </location>
</feature>
<feature type="sequence variant" id="VAR_088296" description="In SHDRA; uncertain significance; dbSNP:rs761443112." evidence="4">
    <original>E</original>
    <variation>Q</variation>
    <location>
        <position position="582"/>
    </location>
</feature>
<feature type="mutagenesis site" description="Abolished O-mannosyltransferase activity." evidence="5">
    <original>D</original>
    <variation>A</variation>
    <location>
        <position position="52"/>
    </location>
</feature>
<feature type="sequence conflict" description="In Ref. 3; BC045556." evidence="8" ref="3">
    <original>P</original>
    <variation>H</variation>
    <location>
        <position position="3"/>
    </location>
</feature>
<feature type="sequence conflict" description="In Ref. 1; BAF85788." evidence="8" ref="1">
    <original>I</original>
    <variation>T</variation>
    <location>
        <position position="57"/>
    </location>
</feature>
<feature type="sequence conflict" description="In Ref. 1; BAA91139." evidence="8" ref="1">
    <original>F</original>
    <variation>V</variation>
    <location>
        <position position="335"/>
    </location>
</feature>
<feature type="sequence conflict" description="In Ref. 1; BAF85788/BAG51667." evidence="8" ref="1">
    <original>N</original>
    <variation>S</variation>
    <location>
        <position position="680"/>
    </location>
</feature>
<evidence type="ECO:0000255" key="1"/>
<evidence type="ECO:0000269" key="2">
    <source>
    </source>
</evidence>
<evidence type="ECO:0000269" key="3">
    <source>
    </source>
</evidence>
<evidence type="ECO:0000269" key="4">
    <source>
    </source>
</evidence>
<evidence type="ECO:0000269" key="5">
    <source>
    </source>
</evidence>
<evidence type="ECO:0000303" key="6">
    <source>
    </source>
</evidence>
<evidence type="ECO:0000303" key="7">
    <source>
    </source>
</evidence>
<evidence type="ECO:0000305" key="8"/>
<evidence type="ECO:0000305" key="9">
    <source>
    </source>
</evidence>
<evidence type="ECO:0000305" key="10">
    <source>
    </source>
</evidence>
<evidence type="ECO:0000312" key="11">
    <source>
        <dbReference type="HGNC" id="HGNC:20185"/>
    </source>
</evidence>
<gene>
    <name evidence="7 11" type="primary">TMEM260</name>
    <name evidence="11" type="synonym">C14orf101</name>
</gene>
<organism>
    <name type="scientific">Homo sapiens</name>
    <name type="common">Human</name>
    <dbReference type="NCBI Taxonomy" id="9606"/>
    <lineage>
        <taxon>Eukaryota</taxon>
        <taxon>Metazoa</taxon>
        <taxon>Chordata</taxon>
        <taxon>Craniata</taxon>
        <taxon>Vertebrata</taxon>
        <taxon>Euteleostomi</taxon>
        <taxon>Mammalia</taxon>
        <taxon>Eutheria</taxon>
        <taxon>Euarchontoglires</taxon>
        <taxon>Primates</taxon>
        <taxon>Haplorrhini</taxon>
        <taxon>Catarrhini</taxon>
        <taxon>Hominidae</taxon>
        <taxon>Homo</taxon>
    </lineage>
</organism>
<proteinExistence type="evidence at protein level"/>
<accession>Q9NX78</accession>
<accession>A8KAN4</accession>
<accession>B3KPF5</accession>
<accession>Q0VAA1</accession>
<accession>Q86XE1</accession>
<sequence>MSPHGDGRGQAQGRAVRVGLRRSGGIRGGVAVFAAVAAVFTFTLPPSVPGGDSGELITAAHELGVAHPPGYPLFTLVAKLAITLFPFGSIAYRVNLLCGLFGAVAASLLFFTVFRLSGSSAGGILAAGVFSFSRLTWQWSIAAEVFSLNNLFVGLLMALTVHFEEAATAKERSKVAKIGAFCCGLSLCNQHTIILYVLCIIPWILFQLLKKKELSLGSLLKLSLYFSAGLLPYVHLPISSYLNHARWTWGDQTTLQGFLTHFLREEYGTFSLAKSEIGSSMSEILLSQVTNMRTELSFNIQALAVCANICLATKDRQNPSLVWLFTGMFCIYSLFFAWRANLDISKPLFMGVVERFWMQSNAVVAVLAGIGLAAVVSETNRVLNSNGLQCLEWLSATLFVVYQIYSNYSVCDQRTNYVIDKFAKNLLTSMPHDAIILLRGDLPGNSLRYMHYCEGLRPDISLVDQEMMTYEWYLPKMAKHLPGVNFPGNRWNPVEGILPSGMVTFNLYHFLEVNKQKETFVCIGIHEGDPTWKKNYSLWPWGSCDKLVPLEIVFNPEEWIKLTKSIYNWTEEYGRFDPSSWESVANEEMWQARMKTPFFIFNLAETAHMPSKVKAQLYAQAYDLYKEIVYLQKEHPVNWHKNYAIACERMLRLQARDADPEVLLSETIRHFRLYSQKAPNDPQQADILGALKHLRKELQSLRNRKNV</sequence>
<name>TM260_HUMAN</name>